<keyword id="KW-0004">4Fe-4S</keyword>
<keyword id="KW-0028">Amino-acid biosynthesis</keyword>
<keyword id="KW-0100">Branched-chain amino acid biosynthesis</keyword>
<keyword id="KW-0408">Iron</keyword>
<keyword id="KW-0411">Iron-sulfur</keyword>
<keyword id="KW-0432">Leucine biosynthesis</keyword>
<keyword id="KW-0456">Lyase</keyword>
<keyword id="KW-0479">Metal-binding</keyword>
<accession>B9KMK4</accession>
<proteinExistence type="inferred from homology"/>
<reference key="1">
    <citation type="journal article" date="2009" name="J. Bacteriol.">
        <title>Complete genome sequence of Rhodobacter sphaeroides KD131.</title>
        <authorList>
            <person name="Lim S.-K."/>
            <person name="Kim S.J."/>
            <person name="Cha S.H."/>
            <person name="Oh Y.-K."/>
            <person name="Rhee H.-J."/>
            <person name="Kim M.-S."/>
            <person name="Lee J.K."/>
        </authorList>
    </citation>
    <scope>NUCLEOTIDE SEQUENCE [LARGE SCALE GENOMIC DNA]</scope>
    <source>
        <strain>KD131 / KCTC 12085</strain>
    </source>
</reference>
<gene>
    <name evidence="1" type="primary">leuC</name>
    <name type="ordered locus">RSKD131_2235</name>
</gene>
<protein>
    <recommendedName>
        <fullName evidence="1">3-isopropylmalate dehydratase large subunit</fullName>
        <ecNumber evidence="1">4.2.1.33</ecNumber>
    </recommendedName>
    <alternativeName>
        <fullName evidence="1">Alpha-IPM isomerase</fullName>
        <shortName evidence="1">IPMI</shortName>
    </alternativeName>
    <alternativeName>
        <fullName evidence="1">Isopropylmalate isomerase</fullName>
    </alternativeName>
</protein>
<organism>
    <name type="scientific">Cereibacter sphaeroides (strain KD131 / KCTC 12085)</name>
    <name type="common">Rhodobacter sphaeroides</name>
    <dbReference type="NCBI Taxonomy" id="557760"/>
    <lineage>
        <taxon>Bacteria</taxon>
        <taxon>Pseudomonadati</taxon>
        <taxon>Pseudomonadota</taxon>
        <taxon>Alphaproteobacteria</taxon>
        <taxon>Rhodobacterales</taxon>
        <taxon>Paracoccaceae</taxon>
        <taxon>Cereibacter</taxon>
    </lineage>
</organism>
<comment type="function">
    <text evidence="1">Catalyzes the isomerization between 2-isopropylmalate and 3-isopropylmalate, via the formation of 2-isopropylmaleate.</text>
</comment>
<comment type="catalytic activity">
    <reaction evidence="1">
        <text>(2R,3S)-3-isopropylmalate = (2S)-2-isopropylmalate</text>
        <dbReference type="Rhea" id="RHEA:32287"/>
        <dbReference type="ChEBI" id="CHEBI:1178"/>
        <dbReference type="ChEBI" id="CHEBI:35121"/>
        <dbReference type="EC" id="4.2.1.33"/>
    </reaction>
</comment>
<comment type="cofactor">
    <cofactor evidence="1">
        <name>[4Fe-4S] cluster</name>
        <dbReference type="ChEBI" id="CHEBI:49883"/>
    </cofactor>
    <text evidence="1">Binds 1 [4Fe-4S] cluster per subunit.</text>
</comment>
<comment type="pathway">
    <text evidence="1">Amino-acid biosynthesis; L-leucine biosynthesis; L-leucine from 3-methyl-2-oxobutanoate: step 2/4.</text>
</comment>
<comment type="subunit">
    <text evidence="1">Heterodimer of LeuC and LeuD.</text>
</comment>
<comment type="similarity">
    <text evidence="1">Belongs to the aconitase/IPM isomerase family. LeuC type 1 subfamily.</text>
</comment>
<sequence>MTAPRTLYDKIWDDHVVHQSEDGTCLLYIDRHLVHEVTSPQAFEGLRMTGRKVRAPEKTIAVPDHNVPTTEGRDTKIDNEESRIQVEALDKNARDFGINYYPVSDIRQGIVHIVGPEQGWTLPGMTVVCGDSHTATHGAFGALAHGIGTSEVEHVLATQTLIQKKSKNMKVEITGSLRPGVTAKDITLSVIGLTGTAGGTGYVIEYCGQAIRELSMEGRMTVCNMAIEGGARAGLIAPDEKTFAYVMGRPHAPKGAAWEAALAYWKTLFTDEGAQFDKVVTIRGEDIAPVVTWGTSPEDVLPITATVPAPEDFTGGKVEAARRSLEYMGLTPGQKLTDIKIDTVFIGSCTNGRIEDLRAAAEILKGKKVAPGMRAMVVPGSGLVRAQAEEEGLAQIFIDAGFEWRLAGCSMCLAMNPDQLSPGERCASTSNRNFEGRQGRNGRTHLVSPGMAAAAAITGHLTDVRDLMTAPAEPA</sequence>
<feature type="chain" id="PRO_1000149372" description="3-isopropylmalate dehydratase large subunit">
    <location>
        <begin position="1"/>
        <end position="475"/>
    </location>
</feature>
<feature type="binding site" evidence="1">
    <location>
        <position position="349"/>
    </location>
    <ligand>
        <name>[4Fe-4S] cluster</name>
        <dbReference type="ChEBI" id="CHEBI:49883"/>
    </ligand>
</feature>
<feature type="binding site" evidence="1">
    <location>
        <position position="409"/>
    </location>
    <ligand>
        <name>[4Fe-4S] cluster</name>
        <dbReference type="ChEBI" id="CHEBI:49883"/>
    </ligand>
</feature>
<feature type="binding site" evidence="1">
    <location>
        <position position="412"/>
    </location>
    <ligand>
        <name>[4Fe-4S] cluster</name>
        <dbReference type="ChEBI" id="CHEBI:49883"/>
    </ligand>
</feature>
<name>LEUC_CERSK</name>
<evidence type="ECO:0000255" key="1">
    <source>
        <dbReference type="HAMAP-Rule" id="MF_01026"/>
    </source>
</evidence>
<dbReference type="EC" id="4.2.1.33" evidence="1"/>
<dbReference type="EMBL" id="CP001150">
    <property type="protein sequence ID" value="ACM02095.1"/>
    <property type="molecule type" value="Genomic_DNA"/>
</dbReference>
<dbReference type="RefSeq" id="WP_009561651.1">
    <property type="nucleotide sequence ID" value="NC_011963.1"/>
</dbReference>
<dbReference type="SMR" id="B9KMK4"/>
<dbReference type="GeneID" id="67447619"/>
<dbReference type="KEGG" id="rsk:RSKD131_2235"/>
<dbReference type="HOGENOM" id="CLU_006714_3_4_5"/>
<dbReference type="UniPathway" id="UPA00048">
    <property type="reaction ID" value="UER00071"/>
</dbReference>
<dbReference type="GO" id="GO:0003861">
    <property type="term" value="F:3-isopropylmalate dehydratase activity"/>
    <property type="evidence" value="ECO:0007669"/>
    <property type="project" value="UniProtKB-UniRule"/>
</dbReference>
<dbReference type="GO" id="GO:0051539">
    <property type="term" value="F:4 iron, 4 sulfur cluster binding"/>
    <property type="evidence" value="ECO:0007669"/>
    <property type="project" value="UniProtKB-KW"/>
</dbReference>
<dbReference type="GO" id="GO:0046872">
    <property type="term" value="F:metal ion binding"/>
    <property type="evidence" value="ECO:0007669"/>
    <property type="project" value="UniProtKB-KW"/>
</dbReference>
<dbReference type="GO" id="GO:0009098">
    <property type="term" value="P:L-leucine biosynthetic process"/>
    <property type="evidence" value="ECO:0007669"/>
    <property type="project" value="UniProtKB-UniRule"/>
</dbReference>
<dbReference type="CDD" id="cd01583">
    <property type="entry name" value="IPMI"/>
    <property type="match status" value="1"/>
</dbReference>
<dbReference type="FunFam" id="3.30.499.10:FF:000006">
    <property type="entry name" value="3-isopropylmalate dehydratase large subunit"/>
    <property type="match status" value="1"/>
</dbReference>
<dbReference type="FunFam" id="3.30.499.10:FF:000007">
    <property type="entry name" value="3-isopropylmalate dehydratase large subunit"/>
    <property type="match status" value="1"/>
</dbReference>
<dbReference type="Gene3D" id="3.30.499.10">
    <property type="entry name" value="Aconitase, domain 3"/>
    <property type="match status" value="2"/>
</dbReference>
<dbReference type="HAMAP" id="MF_01026">
    <property type="entry name" value="LeuC_type1"/>
    <property type="match status" value="1"/>
</dbReference>
<dbReference type="InterPro" id="IPR004430">
    <property type="entry name" value="3-IsopropMal_deHydase_lsu"/>
</dbReference>
<dbReference type="InterPro" id="IPR015931">
    <property type="entry name" value="Acnase/IPM_dHydase_lsu_aba_1/3"/>
</dbReference>
<dbReference type="InterPro" id="IPR001030">
    <property type="entry name" value="Acoase/IPM_deHydtase_lsu_aba"/>
</dbReference>
<dbReference type="InterPro" id="IPR018136">
    <property type="entry name" value="Aconitase_4Fe-4S_BS"/>
</dbReference>
<dbReference type="InterPro" id="IPR036008">
    <property type="entry name" value="Aconitase_4Fe-4S_dom"/>
</dbReference>
<dbReference type="InterPro" id="IPR050067">
    <property type="entry name" value="IPM_dehydratase_rel_enz"/>
</dbReference>
<dbReference type="InterPro" id="IPR033941">
    <property type="entry name" value="IPMI_cat"/>
</dbReference>
<dbReference type="NCBIfam" id="TIGR00170">
    <property type="entry name" value="leuC"/>
    <property type="match status" value="1"/>
</dbReference>
<dbReference type="NCBIfam" id="NF004016">
    <property type="entry name" value="PRK05478.1"/>
    <property type="match status" value="1"/>
</dbReference>
<dbReference type="NCBIfam" id="NF009116">
    <property type="entry name" value="PRK12466.1"/>
    <property type="match status" value="1"/>
</dbReference>
<dbReference type="PANTHER" id="PTHR43822:SF9">
    <property type="entry name" value="3-ISOPROPYLMALATE DEHYDRATASE"/>
    <property type="match status" value="1"/>
</dbReference>
<dbReference type="PANTHER" id="PTHR43822">
    <property type="entry name" value="HOMOACONITASE, MITOCHONDRIAL-RELATED"/>
    <property type="match status" value="1"/>
</dbReference>
<dbReference type="Pfam" id="PF00330">
    <property type="entry name" value="Aconitase"/>
    <property type="match status" value="1"/>
</dbReference>
<dbReference type="PRINTS" id="PR00415">
    <property type="entry name" value="ACONITASE"/>
</dbReference>
<dbReference type="SUPFAM" id="SSF53732">
    <property type="entry name" value="Aconitase iron-sulfur domain"/>
    <property type="match status" value="1"/>
</dbReference>
<dbReference type="PROSITE" id="PS00450">
    <property type="entry name" value="ACONITASE_1"/>
    <property type="match status" value="1"/>
</dbReference>
<dbReference type="PROSITE" id="PS01244">
    <property type="entry name" value="ACONITASE_2"/>
    <property type="match status" value="1"/>
</dbReference>